<sequence length="88" mass="9669">MANTPSAKKAVRKIAARTEINKSRRSRVRTFVRKLEDALLSGDKQAAEVAFKAVEPELMRAASKGVVHKNTAARKVSRLAKRVKALNA</sequence>
<dbReference type="EMBL" id="AM040264">
    <property type="protein sequence ID" value="CAJ12142.1"/>
    <property type="molecule type" value="Genomic_DNA"/>
</dbReference>
<dbReference type="RefSeq" id="WP_002965247.1">
    <property type="nucleotide sequence ID" value="NZ_KN046823.1"/>
</dbReference>
<dbReference type="SMR" id="Q2YQP6"/>
<dbReference type="STRING" id="359391.BAB1_2186"/>
<dbReference type="GeneID" id="97534562"/>
<dbReference type="KEGG" id="bmf:BAB1_2186"/>
<dbReference type="PATRIC" id="fig|359391.11.peg.1424"/>
<dbReference type="HOGENOM" id="CLU_160655_3_0_5"/>
<dbReference type="Proteomes" id="UP000002719">
    <property type="component" value="Chromosome I"/>
</dbReference>
<dbReference type="GO" id="GO:0015935">
    <property type="term" value="C:small ribosomal subunit"/>
    <property type="evidence" value="ECO:0007669"/>
    <property type="project" value="TreeGrafter"/>
</dbReference>
<dbReference type="GO" id="GO:0070181">
    <property type="term" value="F:small ribosomal subunit rRNA binding"/>
    <property type="evidence" value="ECO:0007669"/>
    <property type="project" value="TreeGrafter"/>
</dbReference>
<dbReference type="GO" id="GO:0003735">
    <property type="term" value="F:structural constituent of ribosome"/>
    <property type="evidence" value="ECO:0007669"/>
    <property type="project" value="InterPro"/>
</dbReference>
<dbReference type="GO" id="GO:0006412">
    <property type="term" value="P:translation"/>
    <property type="evidence" value="ECO:0007669"/>
    <property type="project" value="UniProtKB-UniRule"/>
</dbReference>
<dbReference type="FunFam" id="1.20.58.110:FF:000001">
    <property type="entry name" value="30S ribosomal protein S20"/>
    <property type="match status" value="1"/>
</dbReference>
<dbReference type="Gene3D" id="1.20.58.110">
    <property type="entry name" value="Ribosomal protein S20"/>
    <property type="match status" value="1"/>
</dbReference>
<dbReference type="HAMAP" id="MF_00500">
    <property type="entry name" value="Ribosomal_bS20"/>
    <property type="match status" value="1"/>
</dbReference>
<dbReference type="InterPro" id="IPR002583">
    <property type="entry name" value="Ribosomal_bS20"/>
</dbReference>
<dbReference type="InterPro" id="IPR036510">
    <property type="entry name" value="Ribosomal_bS20_sf"/>
</dbReference>
<dbReference type="NCBIfam" id="TIGR00029">
    <property type="entry name" value="S20"/>
    <property type="match status" value="1"/>
</dbReference>
<dbReference type="PANTHER" id="PTHR33398">
    <property type="entry name" value="30S RIBOSOMAL PROTEIN S20"/>
    <property type="match status" value="1"/>
</dbReference>
<dbReference type="PANTHER" id="PTHR33398:SF1">
    <property type="entry name" value="SMALL RIBOSOMAL SUBUNIT PROTEIN BS20C"/>
    <property type="match status" value="1"/>
</dbReference>
<dbReference type="Pfam" id="PF01649">
    <property type="entry name" value="Ribosomal_S20p"/>
    <property type="match status" value="1"/>
</dbReference>
<dbReference type="SUPFAM" id="SSF46992">
    <property type="entry name" value="Ribosomal protein S20"/>
    <property type="match status" value="1"/>
</dbReference>
<gene>
    <name evidence="1" type="primary">rpsT</name>
    <name type="ordered locus">BAB1_2186</name>
</gene>
<reference key="1">
    <citation type="journal article" date="2005" name="Infect. Immun.">
        <title>Whole-genome analyses of speciation events in pathogenic Brucellae.</title>
        <authorList>
            <person name="Chain P.S."/>
            <person name="Comerci D.J."/>
            <person name="Tolmasky M.E."/>
            <person name="Larimer F.W."/>
            <person name="Malfatti S.A."/>
            <person name="Vergez L.M."/>
            <person name="Aguero F."/>
            <person name="Land M.L."/>
            <person name="Ugalde R.A."/>
            <person name="Garcia E."/>
        </authorList>
    </citation>
    <scope>NUCLEOTIDE SEQUENCE [LARGE SCALE GENOMIC DNA]</scope>
    <source>
        <strain>2308</strain>
    </source>
</reference>
<protein>
    <recommendedName>
        <fullName evidence="1">Small ribosomal subunit protein bS20</fullName>
    </recommendedName>
    <alternativeName>
        <fullName evidence="2">30S ribosomal protein S20</fullName>
    </alternativeName>
</protein>
<keyword id="KW-1185">Reference proteome</keyword>
<keyword id="KW-0687">Ribonucleoprotein</keyword>
<keyword id="KW-0689">Ribosomal protein</keyword>
<keyword id="KW-0694">RNA-binding</keyword>
<keyword id="KW-0699">rRNA-binding</keyword>
<name>RS20_BRUA2</name>
<comment type="function">
    <text evidence="1">Binds directly to 16S ribosomal RNA.</text>
</comment>
<comment type="similarity">
    <text evidence="1">Belongs to the bacterial ribosomal protein bS20 family.</text>
</comment>
<accession>Q2YQP6</accession>
<evidence type="ECO:0000255" key="1">
    <source>
        <dbReference type="HAMAP-Rule" id="MF_00500"/>
    </source>
</evidence>
<evidence type="ECO:0000305" key="2"/>
<organism>
    <name type="scientific">Brucella abortus (strain 2308)</name>
    <dbReference type="NCBI Taxonomy" id="359391"/>
    <lineage>
        <taxon>Bacteria</taxon>
        <taxon>Pseudomonadati</taxon>
        <taxon>Pseudomonadota</taxon>
        <taxon>Alphaproteobacteria</taxon>
        <taxon>Hyphomicrobiales</taxon>
        <taxon>Brucellaceae</taxon>
        <taxon>Brucella/Ochrobactrum group</taxon>
        <taxon>Brucella</taxon>
    </lineage>
</organism>
<proteinExistence type="inferred from homology"/>
<feature type="chain" id="PRO_0000236426" description="Small ribosomal subunit protein bS20">
    <location>
        <begin position="1"/>
        <end position="88"/>
    </location>
</feature>